<feature type="initiator methionine" description="Removed" evidence="4">
    <location>
        <position position="1"/>
    </location>
</feature>
<feature type="chain" id="PRO_0000090126" description="Triosephosphate isomerase" evidence="4">
    <location>
        <begin position="2"/>
        <end position="248"/>
    </location>
</feature>
<feature type="active site" description="Electrophile" evidence="1">
    <location>
        <position position="94"/>
    </location>
</feature>
<feature type="active site" description="Proton acceptor" evidence="1">
    <location>
        <position position="165"/>
    </location>
</feature>
<feature type="binding site" evidence="1">
    <location>
        <position position="12"/>
    </location>
    <ligand>
        <name>substrate</name>
    </ligand>
</feature>
<feature type="sequence conflict" description="In Ref. 2; AA sequence." evidence="5" ref="2">
    <original>N</original>
    <variation>I</variation>
    <location>
        <position position="21"/>
    </location>
</feature>
<feature type="sequence conflict" description="In Ref. 2; AA sequence." evidence="5" ref="2">
    <original>N</original>
    <variation>V</variation>
    <location>
        <position position="25"/>
    </location>
</feature>
<comment type="catalytic activity">
    <reaction evidence="5">
        <text>D-glyceraldehyde 3-phosphate = dihydroxyacetone phosphate</text>
        <dbReference type="Rhea" id="RHEA:18585"/>
        <dbReference type="ChEBI" id="CHEBI:57642"/>
        <dbReference type="ChEBI" id="CHEBI:59776"/>
        <dbReference type="EC" id="5.3.1.1"/>
    </reaction>
</comment>
<comment type="pathway">
    <text evidence="5">Carbohydrate biosynthesis; gluconeogenesis.</text>
</comment>
<comment type="pathway">
    <text>Carbohydrate degradation; glycolysis; D-glyceraldehyde 3-phosphate from glycerone phosphate: step 1/1.</text>
</comment>
<comment type="subunit">
    <text evidence="2">Homodimer.</text>
</comment>
<comment type="similarity">
    <text evidence="3">Belongs to the triosephosphate isomerase family.</text>
</comment>
<protein>
    <recommendedName>
        <fullName>Triosephosphate isomerase</fullName>
        <shortName>TIM</shortName>
        <ecNumber>5.3.1.1</ecNumber>
    </recommendedName>
    <alternativeName>
        <fullName>Triose-phosphate isomerase</fullName>
    </alternativeName>
</protein>
<proteinExistence type="evidence at protein level"/>
<dbReference type="EC" id="5.3.1.1"/>
<dbReference type="EMBL" id="AY734490">
    <property type="protein sequence ID" value="AAU34185.1"/>
    <property type="molecule type" value="Genomic_DNA"/>
</dbReference>
<dbReference type="RefSeq" id="NP_001119730.1">
    <property type="nucleotide sequence ID" value="NM_001126258.2"/>
</dbReference>
<dbReference type="SMR" id="P82204"/>
<dbReference type="FunCoup" id="P82204">
    <property type="interactions" value="943"/>
</dbReference>
<dbReference type="STRING" id="7091.P82204"/>
<dbReference type="EnsemblMetazoa" id="NM_001126258.2">
    <property type="protein sequence ID" value="NP_001119730.1"/>
    <property type="gene ID" value="GeneID_100146104"/>
</dbReference>
<dbReference type="GeneID" id="100146104"/>
<dbReference type="KEGG" id="bmor:100146104"/>
<dbReference type="CTD" id="43582"/>
<dbReference type="eggNOG" id="KOG1643">
    <property type="taxonomic scope" value="Eukaryota"/>
</dbReference>
<dbReference type="InParanoid" id="P82204"/>
<dbReference type="OrthoDB" id="206466at7088"/>
<dbReference type="UniPathway" id="UPA00109">
    <property type="reaction ID" value="UER00189"/>
</dbReference>
<dbReference type="UniPathway" id="UPA00138"/>
<dbReference type="Proteomes" id="UP000005204">
    <property type="component" value="Unassembled WGS sequence"/>
</dbReference>
<dbReference type="GO" id="GO:0005829">
    <property type="term" value="C:cytosol"/>
    <property type="evidence" value="ECO:0007669"/>
    <property type="project" value="TreeGrafter"/>
</dbReference>
<dbReference type="GO" id="GO:0004807">
    <property type="term" value="F:triose-phosphate isomerase activity"/>
    <property type="evidence" value="ECO:0007669"/>
    <property type="project" value="UniProtKB-EC"/>
</dbReference>
<dbReference type="GO" id="GO:0006094">
    <property type="term" value="P:gluconeogenesis"/>
    <property type="evidence" value="ECO:0007669"/>
    <property type="project" value="UniProtKB-UniPathway"/>
</dbReference>
<dbReference type="GO" id="GO:0046166">
    <property type="term" value="P:glyceraldehyde-3-phosphate biosynthetic process"/>
    <property type="evidence" value="ECO:0007669"/>
    <property type="project" value="TreeGrafter"/>
</dbReference>
<dbReference type="GO" id="GO:0019563">
    <property type="term" value="P:glycerol catabolic process"/>
    <property type="evidence" value="ECO:0007669"/>
    <property type="project" value="TreeGrafter"/>
</dbReference>
<dbReference type="GO" id="GO:0006096">
    <property type="term" value="P:glycolytic process"/>
    <property type="evidence" value="ECO:0007669"/>
    <property type="project" value="UniProtKB-UniPathway"/>
</dbReference>
<dbReference type="CDD" id="cd00311">
    <property type="entry name" value="TIM"/>
    <property type="match status" value="1"/>
</dbReference>
<dbReference type="FunFam" id="3.20.20.70:FF:000025">
    <property type="entry name" value="Triosephosphate isomerase"/>
    <property type="match status" value="1"/>
</dbReference>
<dbReference type="Gene3D" id="3.20.20.70">
    <property type="entry name" value="Aldolase class I"/>
    <property type="match status" value="1"/>
</dbReference>
<dbReference type="HAMAP" id="MF_00147_B">
    <property type="entry name" value="TIM_B"/>
    <property type="match status" value="1"/>
</dbReference>
<dbReference type="InterPro" id="IPR013785">
    <property type="entry name" value="Aldolase_TIM"/>
</dbReference>
<dbReference type="InterPro" id="IPR035990">
    <property type="entry name" value="TIM_sf"/>
</dbReference>
<dbReference type="InterPro" id="IPR022896">
    <property type="entry name" value="TrioseP_Isoase_bac/euk"/>
</dbReference>
<dbReference type="InterPro" id="IPR000652">
    <property type="entry name" value="Triosephosphate_isomerase"/>
</dbReference>
<dbReference type="InterPro" id="IPR020861">
    <property type="entry name" value="Triosephosphate_isomerase_AS"/>
</dbReference>
<dbReference type="NCBIfam" id="TIGR00419">
    <property type="entry name" value="tim"/>
    <property type="match status" value="1"/>
</dbReference>
<dbReference type="PANTHER" id="PTHR21139">
    <property type="entry name" value="TRIOSEPHOSPHATE ISOMERASE"/>
    <property type="match status" value="1"/>
</dbReference>
<dbReference type="PANTHER" id="PTHR21139:SF2">
    <property type="entry name" value="TRIOSEPHOSPHATE ISOMERASE"/>
    <property type="match status" value="1"/>
</dbReference>
<dbReference type="Pfam" id="PF00121">
    <property type="entry name" value="TIM"/>
    <property type="match status" value="1"/>
</dbReference>
<dbReference type="SUPFAM" id="SSF51351">
    <property type="entry name" value="Triosephosphate isomerase (TIM)"/>
    <property type="match status" value="1"/>
</dbReference>
<dbReference type="PROSITE" id="PS00171">
    <property type="entry name" value="TIM_1"/>
    <property type="match status" value="1"/>
</dbReference>
<dbReference type="PROSITE" id="PS51440">
    <property type="entry name" value="TIM_2"/>
    <property type="match status" value="1"/>
</dbReference>
<name>TPIS_BOMMO</name>
<organism>
    <name type="scientific">Bombyx mori</name>
    <name type="common">Silk moth</name>
    <dbReference type="NCBI Taxonomy" id="7091"/>
    <lineage>
        <taxon>Eukaryota</taxon>
        <taxon>Metazoa</taxon>
        <taxon>Ecdysozoa</taxon>
        <taxon>Arthropoda</taxon>
        <taxon>Hexapoda</taxon>
        <taxon>Insecta</taxon>
        <taxon>Pterygota</taxon>
        <taxon>Neoptera</taxon>
        <taxon>Endopterygota</taxon>
        <taxon>Lepidoptera</taxon>
        <taxon>Glossata</taxon>
        <taxon>Ditrysia</taxon>
        <taxon>Bombycoidea</taxon>
        <taxon>Bombycidae</taxon>
        <taxon>Bombycinae</taxon>
        <taxon>Bombyx</taxon>
    </lineage>
</organism>
<reference evidence="6" key="1">
    <citation type="submission" date="2004-08" db="EMBL/GenBank/DDBJ databases">
        <title>Triosephosphate isomerase (Tpi) gene from Bombyx mori.</title>
        <authorList>
            <person name="Niu B.L."/>
            <person name="Meng Z.Q."/>
            <person name="Lu S.L."/>
        </authorList>
    </citation>
    <scope>NUCLEOTIDE SEQUENCE [GENOMIC DNA]</scope>
</reference>
<reference evidence="5" key="2">
    <citation type="journal article" date="2001" name="Yi Chuan Xue Bao">
        <title>Protein database for several tissues derived from five instar of silkworm.</title>
        <authorList>
            <person name="Zhong B.-X."/>
        </authorList>
    </citation>
    <scope>PROTEIN SEQUENCE OF 2-25</scope>
    <source>
        <strain evidence="4">Xinhang X Keming</strain>
        <tissue evidence="4">Body wall</tissue>
        <tissue evidence="4">Fat body</tissue>
    </source>
</reference>
<sequence>MGRKFVVGGNWKMNGDKNQINEIVNNLKKGPLDPNVEVIVGVPAIYLSYVKTIIPDNVEVAAQNCWKSPKGAFTGEISPAMIKDVGVNWVILGHSERRTIFGEKDELVAEKVAHALESGLKVIACIGETLEERESGKTEEVVFRQLKALVSAIGDKWENIVLAYEPVWAIGTGKTATPQQAQDVHHALRNWLSANVSGSVSDAVRIQYGGSVTAANAKELASCKDIDGFLVGGASLKPEFVEIVNANQ</sequence>
<evidence type="ECO:0000250" key="1"/>
<evidence type="ECO:0000250" key="2">
    <source>
        <dbReference type="UniProtKB" id="P60174"/>
    </source>
</evidence>
<evidence type="ECO:0000255" key="3"/>
<evidence type="ECO:0000269" key="4">
    <source>
    </source>
</evidence>
<evidence type="ECO:0000305" key="5"/>
<evidence type="ECO:0000312" key="6">
    <source>
        <dbReference type="EMBL" id="AAU34185.1"/>
    </source>
</evidence>
<gene>
    <name type="primary">Tpi</name>
</gene>
<accession>P82204</accession>
<accession>P82220</accession>
<accession>Q643R1</accession>
<keyword id="KW-0903">Direct protein sequencing</keyword>
<keyword id="KW-0312">Gluconeogenesis</keyword>
<keyword id="KW-0324">Glycolysis</keyword>
<keyword id="KW-0413">Isomerase</keyword>
<keyword id="KW-1185">Reference proteome</keyword>